<dbReference type="EC" id="2.5.1.145" evidence="1"/>
<dbReference type="EMBL" id="CP000024">
    <property type="protein sequence ID" value="AAV62263.1"/>
    <property type="molecule type" value="Genomic_DNA"/>
</dbReference>
<dbReference type="RefSeq" id="WP_011227036.1">
    <property type="nucleotide sequence ID" value="NC_006449.1"/>
</dbReference>
<dbReference type="SMR" id="Q5M0J6"/>
<dbReference type="KEGG" id="stc:str0667"/>
<dbReference type="HOGENOM" id="CLU_013386_0_1_9"/>
<dbReference type="UniPathway" id="UPA00664"/>
<dbReference type="GO" id="GO:0005886">
    <property type="term" value="C:plasma membrane"/>
    <property type="evidence" value="ECO:0007669"/>
    <property type="project" value="UniProtKB-SubCell"/>
</dbReference>
<dbReference type="GO" id="GO:0008961">
    <property type="term" value="F:phosphatidylglycerol-prolipoprotein diacylglyceryl transferase activity"/>
    <property type="evidence" value="ECO:0007669"/>
    <property type="project" value="UniProtKB-UniRule"/>
</dbReference>
<dbReference type="GO" id="GO:0042158">
    <property type="term" value="P:lipoprotein biosynthetic process"/>
    <property type="evidence" value="ECO:0007669"/>
    <property type="project" value="UniProtKB-UniRule"/>
</dbReference>
<dbReference type="HAMAP" id="MF_01147">
    <property type="entry name" value="Lgt"/>
    <property type="match status" value="1"/>
</dbReference>
<dbReference type="InterPro" id="IPR001640">
    <property type="entry name" value="Lgt"/>
</dbReference>
<dbReference type="NCBIfam" id="TIGR00544">
    <property type="entry name" value="lgt"/>
    <property type="match status" value="1"/>
</dbReference>
<dbReference type="PANTHER" id="PTHR30589:SF0">
    <property type="entry name" value="PHOSPHATIDYLGLYCEROL--PROLIPOPROTEIN DIACYLGLYCERYL TRANSFERASE"/>
    <property type="match status" value="1"/>
</dbReference>
<dbReference type="PANTHER" id="PTHR30589">
    <property type="entry name" value="PROLIPOPROTEIN DIACYLGLYCERYL TRANSFERASE"/>
    <property type="match status" value="1"/>
</dbReference>
<dbReference type="Pfam" id="PF01790">
    <property type="entry name" value="LGT"/>
    <property type="match status" value="1"/>
</dbReference>
<dbReference type="PROSITE" id="PS01311">
    <property type="entry name" value="LGT"/>
    <property type="match status" value="1"/>
</dbReference>
<protein>
    <recommendedName>
        <fullName evidence="1">Phosphatidylglycerol--prolipoprotein diacylglyceryl transferase</fullName>
        <ecNumber evidence="1">2.5.1.145</ecNumber>
    </recommendedName>
</protein>
<sequence length="263" mass="29808">MLATIDPIALRLGPISIHWYAICIVSGLLLAVYLAQRLAPEKGINPEHILDFILLAFPIAIVGARLYYVIFQWSYYSQNPSEIFAIWNGGIAIYGGLIAGAAVLYWFAKRHAIAVLDFLDIAAPGVMIAQSIGRWGNFVNQEAYGKAVSQLNYLPEIIRQQMFINGSYRVPTFLYESLWNLVGFSIILGLRYFNKGLRQGDVTSFYLIWYGLGRFVIEGMRTDSLMFVGLRVSQWVSISIIILGAVLLYFRKQRQKADYKMKN</sequence>
<proteinExistence type="inferred from homology"/>
<comment type="function">
    <text evidence="1">Catalyzes the transfer of the diacylglyceryl group from phosphatidylglycerol to the sulfhydryl group of the N-terminal cysteine of a prolipoprotein, the first step in the formation of mature lipoproteins.</text>
</comment>
<comment type="catalytic activity">
    <reaction evidence="1">
        <text>L-cysteinyl-[prolipoprotein] + a 1,2-diacyl-sn-glycero-3-phospho-(1'-sn-glycerol) = an S-1,2-diacyl-sn-glyceryl-L-cysteinyl-[prolipoprotein] + sn-glycerol 1-phosphate + H(+)</text>
        <dbReference type="Rhea" id="RHEA:56712"/>
        <dbReference type="Rhea" id="RHEA-COMP:14679"/>
        <dbReference type="Rhea" id="RHEA-COMP:14680"/>
        <dbReference type="ChEBI" id="CHEBI:15378"/>
        <dbReference type="ChEBI" id="CHEBI:29950"/>
        <dbReference type="ChEBI" id="CHEBI:57685"/>
        <dbReference type="ChEBI" id="CHEBI:64716"/>
        <dbReference type="ChEBI" id="CHEBI:140658"/>
        <dbReference type="EC" id="2.5.1.145"/>
    </reaction>
</comment>
<comment type="pathway">
    <text evidence="1">Protein modification; lipoprotein biosynthesis (diacylglyceryl transfer).</text>
</comment>
<comment type="subcellular location">
    <subcellularLocation>
        <location evidence="1">Cell membrane</location>
        <topology evidence="1">Multi-pass membrane protein</topology>
    </subcellularLocation>
</comment>
<comment type="similarity">
    <text evidence="1">Belongs to the Lgt family.</text>
</comment>
<name>LGT_STRT1</name>
<keyword id="KW-1003">Cell membrane</keyword>
<keyword id="KW-0472">Membrane</keyword>
<keyword id="KW-0808">Transferase</keyword>
<keyword id="KW-0812">Transmembrane</keyword>
<keyword id="KW-1133">Transmembrane helix</keyword>
<accession>Q5M0J6</accession>
<evidence type="ECO:0000255" key="1">
    <source>
        <dbReference type="HAMAP-Rule" id="MF_01147"/>
    </source>
</evidence>
<gene>
    <name evidence="1" type="primary">lgt</name>
    <name type="ordered locus">str0667</name>
</gene>
<organism>
    <name type="scientific">Streptococcus thermophilus (strain CNRZ 1066)</name>
    <dbReference type="NCBI Taxonomy" id="299768"/>
    <lineage>
        <taxon>Bacteria</taxon>
        <taxon>Bacillati</taxon>
        <taxon>Bacillota</taxon>
        <taxon>Bacilli</taxon>
        <taxon>Lactobacillales</taxon>
        <taxon>Streptococcaceae</taxon>
        <taxon>Streptococcus</taxon>
    </lineage>
</organism>
<feature type="chain" id="PRO_0000172694" description="Phosphatidylglycerol--prolipoprotein diacylglyceryl transferase">
    <location>
        <begin position="1"/>
        <end position="263"/>
    </location>
</feature>
<feature type="transmembrane region" description="Helical" evidence="1">
    <location>
        <begin position="15"/>
        <end position="35"/>
    </location>
</feature>
<feature type="transmembrane region" description="Helical" evidence="1">
    <location>
        <begin position="52"/>
        <end position="72"/>
    </location>
</feature>
<feature type="transmembrane region" description="Helical" evidence="1">
    <location>
        <begin position="83"/>
        <end position="103"/>
    </location>
</feature>
<feature type="transmembrane region" description="Helical" evidence="1">
    <location>
        <begin position="112"/>
        <end position="132"/>
    </location>
</feature>
<feature type="transmembrane region" description="Helical" evidence="1">
    <location>
        <begin position="170"/>
        <end position="190"/>
    </location>
</feature>
<feature type="transmembrane region" description="Helical" evidence="1">
    <location>
        <begin position="200"/>
        <end position="220"/>
    </location>
</feature>
<feature type="transmembrane region" description="Helical" evidence="1">
    <location>
        <begin position="227"/>
        <end position="247"/>
    </location>
</feature>
<feature type="binding site" evidence="1">
    <location>
        <position position="134"/>
    </location>
    <ligand>
        <name>a 1,2-diacyl-sn-glycero-3-phospho-(1'-sn-glycerol)</name>
        <dbReference type="ChEBI" id="CHEBI:64716"/>
    </ligand>
</feature>
<reference key="1">
    <citation type="journal article" date="2004" name="Nat. Biotechnol.">
        <title>Complete sequence and comparative genome analysis of the dairy bacterium Streptococcus thermophilus.</title>
        <authorList>
            <person name="Bolotin A."/>
            <person name="Quinquis B."/>
            <person name="Renault P."/>
            <person name="Sorokin A."/>
            <person name="Ehrlich S.D."/>
            <person name="Kulakauskas S."/>
            <person name="Lapidus A."/>
            <person name="Goltsman E."/>
            <person name="Mazur M."/>
            <person name="Pusch G.D."/>
            <person name="Fonstein M."/>
            <person name="Overbeek R."/>
            <person name="Kyprides N."/>
            <person name="Purnelle B."/>
            <person name="Prozzi D."/>
            <person name="Ngui K."/>
            <person name="Masuy D."/>
            <person name="Hancy F."/>
            <person name="Burteau S."/>
            <person name="Boutry M."/>
            <person name="Delcour J."/>
            <person name="Goffeau A."/>
            <person name="Hols P."/>
        </authorList>
    </citation>
    <scope>NUCLEOTIDE SEQUENCE [LARGE SCALE GENOMIC DNA]</scope>
    <source>
        <strain>CNRZ 1066</strain>
    </source>
</reference>